<proteinExistence type="inferred from homology"/>
<organism>
    <name type="scientific">Salmonella paratyphi A (strain ATCC 9150 / SARB42)</name>
    <dbReference type="NCBI Taxonomy" id="295319"/>
    <lineage>
        <taxon>Bacteria</taxon>
        <taxon>Pseudomonadati</taxon>
        <taxon>Pseudomonadota</taxon>
        <taxon>Gammaproteobacteria</taxon>
        <taxon>Enterobacterales</taxon>
        <taxon>Enterobacteriaceae</taxon>
        <taxon>Salmonella</taxon>
    </lineage>
</organism>
<protein>
    <recommendedName>
        <fullName evidence="1">Phosphatidylglycerol--prolipoprotein diacylglyceryl transferase</fullName>
        <ecNumber evidence="1">2.5.1.145</ecNumber>
    </recommendedName>
</protein>
<feature type="chain" id="PRO_0000172666" description="Phosphatidylglycerol--prolipoprotein diacylglyceryl transferase">
    <location>
        <begin position="1"/>
        <end position="291"/>
    </location>
</feature>
<feature type="transmembrane region" description="Helical" evidence="1">
    <location>
        <begin position="21"/>
        <end position="41"/>
    </location>
</feature>
<feature type="transmembrane region" description="Helical" evidence="1">
    <location>
        <begin position="60"/>
        <end position="80"/>
    </location>
</feature>
<feature type="transmembrane region" description="Helical" evidence="1">
    <location>
        <begin position="96"/>
        <end position="116"/>
    </location>
</feature>
<feature type="transmembrane region" description="Helical" evidence="1">
    <location>
        <begin position="130"/>
        <end position="150"/>
    </location>
</feature>
<feature type="transmembrane region" description="Helical" evidence="1">
    <location>
        <begin position="198"/>
        <end position="218"/>
    </location>
</feature>
<feature type="transmembrane region" description="Helical" evidence="1">
    <location>
        <begin position="225"/>
        <end position="245"/>
    </location>
</feature>
<feature type="transmembrane region" description="Helical" evidence="1">
    <location>
        <begin position="260"/>
        <end position="280"/>
    </location>
</feature>
<feature type="binding site" evidence="1">
    <location>
        <position position="143"/>
    </location>
    <ligand>
        <name>a 1,2-diacyl-sn-glycero-3-phospho-(1'-sn-glycerol)</name>
        <dbReference type="ChEBI" id="CHEBI:64716"/>
    </ligand>
</feature>
<evidence type="ECO:0000255" key="1">
    <source>
        <dbReference type="HAMAP-Rule" id="MF_01147"/>
    </source>
</evidence>
<evidence type="ECO:0000305" key="2"/>
<gene>
    <name evidence="1" type="primary">lgt</name>
    <name type="ordered locus">SPA2867</name>
</gene>
<reference key="1">
    <citation type="journal article" date="2004" name="Nat. Genet.">
        <title>Comparison of genome degradation in Paratyphi A and Typhi, human-restricted serovars of Salmonella enterica that cause typhoid.</title>
        <authorList>
            <person name="McClelland M."/>
            <person name="Sanderson K.E."/>
            <person name="Clifton S.W."/>
            <person name="Latreille P."/>
            <person name="Porwollik S."/>
            <person name="Sabo A."/>
            <person name="Meyer R."/>
            <person name="Bieri T."/>
            <person name="Ozersky P."/>
            <person name="McLellan M."/>
            <person name="Harkins C.R."/>
            <person name="Wang C."/>
            <person name="Nguyen C."/>
            <person name="Berghoff A."/>
            <person name="Elliott G."/>
            <person name="Kohlberg S."/>
            <person name="Strong C."/>
            <person name="Du F."/>
            <person name="Carter J."/>
            <person name="Kremizki C."/>
            <person name="Layman D."/>
            <person name="Leonard S."/>
            <person name="Sun H."/>
            <person name="Fulton L."/>
            <person name="Nash W."/>
            <person name="Miner T."/>
            <person name="Minx P."/>
            <person name="Delehaunty K."/>
            <person name="Fronick C."/>
            <person name="Magrini V."/>
            <person name="Nhan M."/>
            <person name="Warren W."/>
            <person name="Florea L."/>
            <person name="Spieth J."/>
            <person name="Wilson R.K."/>
        </authorList>
    </citation>
    <scope>NUCLEOTIDE SEQUENCE [LARGE SCALE GENOMIC DNA]</scope>
    <source>
        <strain>ATCC 9150 / SARB42</strain>
    </source>
</reference>
<comment type="function">
    <text evidence="1">Catalyzes the transfer of the diacylglyceryl group from phosphatidylglycerol to the sulfhydryl group of the N-terminal cysteine of a prolipoprotein, the first step in the formation of mature lipoproteins.</text>
</comment>
<comment type="catalytic activity">
    <reaction evidence="1">
        <text>L-cysteinyl-[prolipoprotein] + a 1,2-diacyl-sn-glycero-3-phospho-(1'-sn-glycerol) = an S-1,2-diacyl-sn-glyceryl-L-cysteinyl-[prolipoprotein] + sn-glycerol 1-phosphate + H(+)</text>
        <dbReference type="Rhea" id="RHEA:56712"/>
        <dbReference type="Rhea" id="RHEA-COMP:14679"/>
        <dbReference type="Rhea" id="RHEA-COMP:14680"/>
        <dbReference type="ChEBI" id="CHEBI:15378"/>
        <dbReference type="ChEBI" id="CHEBI:29950"/>
        <dbReference type="ChEBI" id="CHEBI:57685"/>
        <dbReference type="ChEBI" id="CHEBI:64716"/>
        <dbReference type="ChEBI" id="CHEBI:140658"/>
        <dbReference type="EC" id="2.5.1.145"/>
    </reaction>
</comment>
<comment type="pathway">
    <text evidence="1">Protein modification; lipoprotein biosynthesis (diacylglyceryl transfer).</text>
</comment>
<comment type="subcellular location">
    <subcellularLocation>
        <location evidence="1">Cell inner membrane</location>
        <topology evidence="1">Multi-pass membrane protein</topology>
    </subcellularLocation>
</comment>
<comment type="similarity">
    <text evidence="1 2">Belongs to the Lgt family.</text>
</comment>
<accession>Q5PEN5</accession>
<name>LGT_SALPA</name>
<sequence>MTSSYLHFPDFDPVIFSIGPVALHWYGLMYLVGFVFAMWLAVRRANRPGSGWTKNEVENLLYAGFLGVFLGGRIGYVLFYNFPLFLDNPLYLFRVWDGGMSFHGGLIGVILVMIIFARRTKRSFFQVSDFIAPLIPFGLGAGRLGNFINGELWGRVDPNFRFAMLFPGSRAEDIALLPSHPQWQPIFDTYGVLPRHPSQLYELALEGVVLFIILNLFIRKPRPMGAVSGLFLIGYGAFRIIVEFFRQPDAQFTGAWVQYISMGQILSIPMIIAGAIMMVWAYRRRPQQHVS</sequence>
<dbReference type="EC" id="2.5.1.145" evidence="1"/>
<dbReference type="EMBL" id="CP000026">
    <property type="protein sequence ID" value="AAV78712.1"/>
    <property type="molecule type" value="Genomic_DNA"/>
</dbReference>
<dbReference type="RefSeq" id="WP_000204647.1">
    <property type="nucleotide sequence ID" value="NC_006511.1"/>
</dbReference>
<dbReference type="SMR" id="Q5PEN5"/>
<dbReference type="KEGG" id="spt:SPA2867"/>
<dbReference type="HOGENOM" id="CLU_013386_1_0_6"/>
<dbReference type="UniPathway" id="UPA00664"/>
<dbReference type="Proteomes" id="UP000008185">
    <property type="component" value="Chromosome"/>
</dbReference>
<dbReference type="GO" id="GO:0005886">
    <property type="term" value="C:plasma membrane"/>
    <property type="evidence" value="ECO:0007669"/>
    <property type="project" value="UniProtKB-SubCell"/>
</dbReference>
<dbReference type="GO" id="GO:0008961">
    <property type="term" value="F:phosphatidylglycerol-prolipoprotein diacylglyceryl transferase activity"/>
    <property type="evidence" value="ECO:0007669"/>
    <property type="project" value="UniProtKB-UniRule"/>
</dbReference>
<dbReference type="GO" id="GO:0042158">
    <property type="term" value="P:lipoprotein biosynthetic process"/>
    <property type="evidence" value="ECO:0007669"/>
    <property type="project" value="UniProtKB-UniRule"/>
</dbReference>
<dbReference type="HAMAP" id="MF_01147">
    <property type="entry name" value="Lgt"/>
    <property type="match status" value="1"/>
</dbReference>
<dbReference type="InterPro" id="IPR001640">
    <property type="entry name" value="Lgt"/>
</dbReference>
<dbReference type="NCBIfam" id="TIGR00544">
    <property type="entry name" value="lgt"/>
    <property type="match status" value="1"/>
</dbReference>
<dbReference type="PANTHER" id="PTHR30589:SF0">
    <property type="entry name" value="PHOSPHATIDYLGLYCEROL--PROLIPOPROTEIN DIACYLGLYCERYL TRANSFERASE"/>
    <property type="match status" value="1"/>
</dbReference>
<dbReference type="PANTHER" id="PTHR30589">
    <property type="entry name" value="PROLIPOPROTEIN DIACYLGLYCERYL TRANSFERASE"/>
    <property type="match status" value="1"/>
</dbReference>
<dbReference type="Pfam" id="PF01790">
    <property type="entry name" value="LGT"/>
    <property type="match status" value="1"/>
</dbReference>
<dbReference type="PROSITE" id="PS01311">
    <property type="entry name" value="LGT"/>
    <property type="match status" value="1"/>
</dbReference>
<keyword id="KW-0997">Cell inner membrane</keyword>
<keyword id="KW-1003">Cell membrane</keyword>
<keyword id="KW-0472">Membrane</keyword>
<keyword id="KW-0808">Transferase</keyword>
<keyword id="KW-0812">Transmembrane</keyword>
<keyword id="KW-1133">Transmembrane helix</keyword>